<protein>
    <recommendedName>
        <fullName evidence="1">Methylthioribose-1-phosphate isomerase</fullName>
        <shortName evidence="1">M1Pi</shortName>
        <shortName evidence="1">MTR-1-P isomerase</shortName>
        <ecNumber evidence="1">5.3.1.23</ecNumber>
    </recommendedName>
    <alternativeName>
        <fullName evidence="1">S-methyl-5-thioribose-1-phosphate isomerase</fullName>
    </alternativeName>
    <alternativeName>
        <fullName evidence="1">Translation initiation factor eIF-2B subunit alpha/beta/delta-like protein</fullName>
    </alternativeName>
</protein>
<evidence type="ECO:0000255" key="1">
    <source>
        <dbReference type="HAMAP-Rule" id="MF_03119"/>
    </source>
</evidence>
<proteinExistence type="inferred from homology"/>
<accession>A9UQ62</accession>
<feature type="chain" id="PRO_0000402061" description="Methylthioribose-1-phosphate isomerase">
    <location>
        <begin position="1"/>
        <end position="361"/>
    </location>
</feature>
<feature type="active site" description="Proton donor" evidence="1">
    <location>
        <position position="245"/>
    </location>
</feature>
<feature type="site" description="Transition state stabilizer" evidence="1">
    <location>
        <position position="165"/>
    </location>
</feature>
<gene>
    <name type="ORF">34861</name>
</gene>
<sequence>MATLEAIKYDGEKLLVLDQIKLPLETHYDEVLSIQDGWDAIREMRVRGAPAIAIVAALTIAVVMKRSTFATAAELAAFVRTSLEHLRTSRPTAVNLFEMAGRLEALLQEQPADCTEAALRQAVLSYIEGMMQADIADNQAIGKFGAEAILKDLSADVKVKVLTHCNTGSLATARYGTALGVIRSLHEQQRLEHAFCTETRPYNQGARLTAYELVTEGIPGTLVADSMVSLLMKQKGISAVVVGADRVVANGDTANKIGTYQIAIAAKHHGVPFFVAAPLTSVDLKLSHGSEITIEERPGKELTHIFGQQLAAPGIGTWNPAFDVTPADLITGIITERGVAYKAEGQQEFDMASFAASVGRA</sequence>
<dbReference type="EC" id="5.3.1.23" evidence="1"/>
<dbReference type="EMBL" id="CH991543">
    <property type="protein sequence ID" value="EDQ92992.1"/>
    <property type="molecule type" value="Genomic_DNA"/>
</dbReference>
<dbReference type="RefSeq" id="XP_001742754.1">
    <property type="nucleotide sequence ID" value="XM_001742702.1"/>
</dbReference>
<dbReference type="SMR" id="A9UQ62"/>
<dbReference type="FunCoup" id="A9UQ62">
    <property type="interactions" value="1082"/>
</dbReference>
<dbReference type="STRING" id="81824.A9UQ62"/>
<dbReference type="EnsemblProtists" id="EDQ92992">
    <property type="protein sequence ID" value="EDQ92992"/>
    <property type="gene ID" value="MONBRDRAFT_34861"/>
</dbReference>
<dbReference type="KEGG" id="mbr:MONBRDRAFT_34861"/>
<dbReference type="eggNOG" id="KOG1468">
    <property type="taxonomic scope" value="Eukaryota"/>
</dbReference>
<dbReference type="InParanoid" id="A9UQ62"/>
<dbReference type="OMA" id="CETRPLN"/>
<dbReference type="UniPathway" id="UPA00904">
    <property type="reaction ID" value="UER00874"/>
</dbReference>
<dbReference type="Proteomes" id="UP000001357">
    <property type="component" value="Unassembled WGS sequence"/>
</dbReference>
<dbReference type="GO" id="GO:0005737">
    <property type="term" value="C:cytoplasm"/>
    <property type="evidence" value="ECO:0007669"/>
    <property type="project" value="UniProtKB-SubCell"/>
</dbReference>
<dbReference type="GO" id="GO:0005634">
    <property type="term" value="C:nucleus"/>
    <property type="evidence" value="ECO:0007669"/>
    <property type="project" value="UniProtKB-SubCell"/>
</dbReference>
<dbReference type="GO" id="GO:0046523">
    <property type="term" value="F:S-methyl-5-thioribose-1-phosphate isomerase activity"/>
    <property type="evidence" value="ECO:0000318"/>
    <property type="project" value="GO_Central"/>
</dbReference>
<dbReference type="GO" id="GO:0019509">
    <property type="term" value="P:L-methionine salvage from methylthioadenosine"/>
    <property type="evidence" value="ECO:0000318"/>
    <property type="project" value="GO_Central"/>
</dbReference>
<dbReference type="FunFam" id="1.20.120.420:FF:000003">
    <property type="entry name" value="Methylthioribose-1-phosphate isomerase"/>
    <property type="match status" value="1"/>
</dbReference>
<dbReference type="FunFam" id="3.40.50.10470:FF:000003">
    <property type="entry name" value="Methylthioribose-1-phosphate isomerase"/>
    <property type="match status" value="1"/>
</dbReference>
<dbReference type="Gene3D" id="1.20.120.420">
    <property type="entry name" value="translation initiation factor eif-2b, domain 1"/>
    <property type="match status" value="1"/>
</dbReference>
<dbReference type="Gene3D" id="3.40.50.10470">
    <property type="entry name" value="Translation initiation factor eif-2b, domain 2"/>
    <property type="match status" value="1"/>
</dbReference>
<dbReference type="HAMAP" id="MF_01678">
    <property type="entry name" value="Salvage_MtnA"/>
    <property type="match status" value="1"/>
</dbReference>
<dbReference type="InterPro" id="IPR000649">
    <property type="entry name" value="IF-2B-related"/>
</dbReference>
<dbReference type="InterPro" id="IPR005251">
    <property type="entry name" value="IF-M1Pi"/>
</dbReference>
<dbReference type="InterPro" id="IPR042529">
    <property type="entry name" value="IF_2B-like_C"/>
</dbReference>
<dbReference type="InterPro" id="IPR011559">
    <property type="entry name" value="Initiation_fac_2B_a/b/d"/>
</dbReference>
<dbReference type="InterPro" id="IPR027363">
    <property type="entry name" value="M1Pi_N"/>
</dbReference>
<dbReference type="InterPro" id="IPR037171">
    <property type="entry name" value="NagB/RpiA_transferase-like"/>
</dbReference>
<dbReference type="NCBIfam" id="TIGR00524">
    <property type="entry name" value="eIF-2B_rel"/>
    <property type="match status" value="1"/>
</dbReference>
<dbReference type="NCBIfam" id="NF004326">
    <property type="entry name" value="PRK05720.1"/>
    <property type="match status" value="1"/>
</dbReference>
<dbReference type="NCBIfam" id="TIGR00512">
    <property type="entry name" value="salvage_mtnA"/>
    <property type="match status" value="1"/>
</dbReference>
<dbReference type="PANTHER" id="PTHR43475">
    <property type="entry name" value="METHYLTHIORIBOSE-1-PHOSPHATE ISOMERASE"/>
    <property type="match status" value="1"/>
</dbReference>
<dbReference type="PANTHER" id="PTHR43475:SF1">
    <property type="entry name" value="METHYLTHIORIBOSE-1-PHOSPHATE ISOMERASE"/>
    <property type="match status" value="1"/>
</dbReference>
<dbReference type="Pfam" id="PF01008">
    <property type="entry name" value="IF-2B"/>
    <property type="match status" value="1"/>
</dbReference>
<dbReference type="SUPFAM" id="SSF100950">
    <property type="entry name" value="NagB/RpiA/CoA transferase-like"/>
    <property type="match status" value="1"/>
</dbReference>
<organism>
    <name type="scientific">Monosiga brevicollis</name>
    <name type="common">Choanoflagellate</name>
    <dbReference type="NCBI Taxonomy" id="81824"/>
    <lineage>
        <taxon>Eukaryota</taxon>
        <taxon>Choanoflagellata</taxon>
        <taxon>Craspedida</taxon>
        <taxon>Salpingoecidae</taxon>
        <taxon>Monosiga</taxon>
    </lineage>
</organism>
<keyword id="KW-0028">Amino-acid biosynthesis</keyword>
<keyword id="KW-0963">Cytoplasm</keyword>
<keyword id="KW-0413">Isomerase</keyword>
<keyword id="KW-0486">Methionine biosynthesis</keyword>
<keyword id="KW-0539">Nucleus</keyword>
<keyword id="KW-1185">Reference proteome</keyword>
<name>MTNA_MONBE</name>
<reference key="1">
    <citation type="journal article" date="2008" name="Nature">
        <title>The genome of the choanoflagellate Monosiga brevicollis and the origin of metazoans.</title>
        <authorList>
            <consortium name="JGI Sequencing"/>
            <person name="King N."/>
            <person name="Westbrook M.J."/>
            <person name="Young S.L."/>
            <person name="Kuo A."/>
            <person name="Abedin M."/>
            <person name="Chapman J."/>
            <person name="Fairclough S."/>
            <person name="Hellsten U."/>
            <person name="Isogai Y."/>
            <person name="Letunic I."/>
            <person name="Marr M."/>
            <person name="Pincus D."/>
            <person name="Putnam N."/>
            <person name="Rokas A."/>
            <person name="Wright K.J."/>
            <person name="Zuzow R."/>
            <person name="Dirks W."/>
            <person name="Good M."/>
            <person name="Goodstein D."/>
            <person name="Lemons D."/>
            <person name="Li W."/>
            <person name="Lyons J.B."/>
            <person name="Morris A."/>
            <person name="Nichols S."/>
            <person name="Richter D.J."/>
            <person name="Salamov A."/>
            <person name="Bork P."/>
            <person name="Lim W.A."/>
            <person name="Manning G."/>
            <person name="Miller W.T."/>
            <person name="McGinnis W."/>
            <person name="Shapiro H."/>
            <person name="Tjian R."/>
            <person name="Grigoriev I.V."/>
            <person name="Rokhsar D."/>
        </authorList>
    </citation>
    <scope>NUCLEOTIDE SEQUENCE [LARGE SCALE GENOMIC DNA]</scope>
    <source>
        <strain>MX1 / ATCC 50154</strain>
    </source>
</reference>
<comment type="function">
    <text evidence="1">Catalyzes the interconversion of methylthioribose-1-phosphate (MTR-1-P) into methylthioribulose-1-phosphate (MTRu-1-P).</text>
</comment>
<comment type="catalytic activity">
    <reaction evidence="1">
        <text>5-(methylsulfanyl)-alpha-D-ribose 1-phosphate = 5-(methylsulfanyl)-D-ribulose 1-phosphate</text>
        <dbReference type="Rhea" id="RHEA:19989"/>
        <dbReference type="ChEBI" id="CHEBI:58533"/>
        <dbReference type="ChEBI" id="CHEBI:58548"/>
        <dbReference type="EC" id="5.3.1.23"/>
    </reaction>
</comment>
<comment type="pathway">
    <text evidence="1">Amino-acid biosynthesis; L-methionine biosynthesis via salvage pathway; L-methionine from S-methyl-5-thio-alpha-D-ribose 1-phosphate: step 1/6.</text>
</comment>
<comment type="subcellular location">
    <subcellularLocation>
        <location evidence="1">Cytoplasm</location>
    </subcellularLocation>
    <subcellularLocation>
        <location evidence="1">Nucleus</location>
    </subcellularLocation>
</comment>
<comment type="similarity">
    <text evidence="1">Belongs to the eIF-2B alpha/beta/delta subunits family. MtnA subfamily.</text>
</comment>